<proteinExistence type="evidence at protein level"/>
<gene>
    <name type="primary">Rpl37</name>
</gene>
<dbReference type="EMBL" id="X66369">
    <property type="protein sequence ID" value="CAA47012.1"/>
    <property type="molecule type" value="mRNA"/>
</dbReference>
<dbReference type="EMBL" id="S79981">
    <property type="protein sequence ID" value="AAP32040.1"/>
    <property type="molecule type" value="mRNA"/>
</dbReference>
<dbReference type="EMBL" id="BC059132">
    <property type="protein sequence ID" value="AAH59132.1"/>
    <property type="molecule type" value="mRNA"/>
</dbReference>
<dbReference type="EMBL" id="BC069173">
    <property type="protein sequence ID" value="AAH69173.1"/>
    <property type="molecule type" value="mRNA"/>
</dbReference>
<dbReference type="PIR" id="JN0478">
    <property type="entry name" value="R6RT37"/>
</dbReference>
<dbReference type="RefSeq" id="NP_001386800.1">
    <property type="nucleotide sequence ID" value="NM_001399871.1"/>
</dbReference>
<dbReference type="RefSeq" id="NP_112368.1">
    <property type="nucleotide sequence ID" value="NM_031106.1"/>
</dbReference>
<dbReference type="RefSeq" id="XP_002727261.1">
    <property type="nucleotide sequence ID" value="XM_002727215.5"/>
</dbReference>
<dbReference type="RefSeq" id="XP_002730083.1">
    <property type="nucleotide sequence ID" value="XM_002730037.5"/>
</dbReference>
<dbReference type="RefSeq" id="XP_017453151.1">
    <property type="nucleotide sequence ID" value="XM_017597662.1"/>
</dbReference>
<dbReference type="RefSeq" id="XP_017459577.1">
    <property type="nucleotide sequence ID" value="XM_017604088.1"/>
</dbReference>
<dbReference type="SMR" id="P61928"/>
<dbReference type="FunCoup" id="P61928">
    <property type="interactions" value="805"/>
</dbReference>
<dbReference type="STRING" id="10116.ENSRNOP00000039155"/>
<dbReference type="iPTMnet" id="P61928"/>
<dbReference type="PhosphoSitePlus" id="P61928"/>
<dbReference type="PaxDb" id="10116-ENSRNOP00000017052"/>
<dbReference type="Ensembl" id="ENSRNOT00000045156.6">
    <property type="protein sequence ID" value="ENSRNOP00000049205.3"/>
    <property type="gene ID" value="ENSRNOG00000033803.6"/>
</dbReference>
<dbReference type="Ensembl" id="ENSRNOT00000046519.5">
    <property type="protein sequence ID" value="ENSRNOP00000039155.2"/>
    <property type="gene ID" value="ENSRNOG00000034180.5"/>
</dbReference>
<dbReference type="GeneID" id="120093056"/>
<dbReference type="GeneID" id="81770"/>
<dbReference type="KEGG" id="rno:81770"/>
<dbReference type="AGR" id="RGD:41394010"/>
<dbReference type="AGR" id="RGD:621204"/>
<dbReference type="CTD" id="81770"/>
<dbReference type="RGD" id="621204">
    <property type="gene designation" value="Rpl37"/>
</dbReference>
<dbReference type="eggNOG" id="KOG3475">
    <property type="taxonomic scope" value="Eukaryota"/>
</dbReference>
<dbReference type="GeneTree" id="ENSGT00390000005254"/>
<dbReference type="HOGENOM" id="CLU_150908_0_0_1"/>
<dbReference type="InParanoid" id="P61928"/>
<dbReference type="OMA" id="RMAYLKH"/>
<dbReference type="OrthoDB" id="10259236at2759"/>
<dbReference type="PhylomeDB" id="P61928"/>
<dbReference type="TreeFam" id="TF300260"/>
<dbReference type="Reactome" id="R-RNO-156827">
    <property type="pathway name" value="L13a-mediated translational silencing of Ceruloplasmin expression"/>
</dbReference>
<dbReference type="Reactome" id="R-RNO-1799339">
    <property type="pathway name" value="SRP-dependent cotranslational protein targeting to membrane"/>
</dbReference>
<dbReference type="Reactome" id="R-RNO-6791226">
    <property type="pathway name" value="Major pathway of rRNA processing in the nucleolus and cytosol"/>
</dbReference>
<dbReference type="Reactome" id="R-RNO-72689">
    <property type="pathway name" value="Formation of a pool of free 40S subunits"/>
</dbReference>
<dbReference type="Reactome" id="R-RNO-72706">
    <property type="pathway name" value="GTP hydrolysis and joining of the 60S ribosomal subunit"/>
</dbReference>
<dbReference type="Reactome" id="R-RNO-975956">
    <property type="pathway name" value="Nonsense Mediated Decay (NMD) independent of the Exon Junction Complex (EJC)"/>
</dbReference>
<dbReference type="Reactome" id="R-RNO-975957">
    <property type="pathway name" value="Nonsense Mediated Decay (NMD) enhanced by the Exon Junction Complex (EJC)"/>
</dbReference>
<dbReference type="PRO" id="PR:P61928"/>
<dbReference type="Proteomes" id="UP000002494">
    <property type="component" value="Chromosome 10"/>
</dbReference>
<dbReference type="Proteomes" id="UP000002494">
    <property type="component" value="Chromosome 9"/>
</dbReference>
<dbReference type="Bgee" id="ENSRNOG00000033803">
    <property type="expression patterns" value="Expressed in thymus and 19 other cell types or tissues"/>
</dbReference>
<dbReference type="GO" id="GO:0022625">
    <property type="term" value="C:cytosolic large ribosomal subunit"/>
    <property type="evidence" value="ECO:0000314"/>
    <property type="project" value="RGD"/>
</dbReference>
<dbReference type="GO" id="GO:0019838">
    <property type="term" value="F:growth factor binding"/>
    <property type="evidence" value="ECO:0000353"/>
    <property type="project" value="RGD"/>
</dbReference>
<dbReference type="GO" id="GO:0003723">
    <property type="term" value="F:RNA binding"/>
    <property type="evidence" value="ECO:0000318"/>
    <property type="project" value="GO_Central"/>
</dbReference>
<dbReference type="GO" id="GO:0019843">
    <property type="term" value="F:rRNA binding"/>
    <property type="evidence" value="ECO:0007669"/>
    <property type="project" value="UniProtKB-KW"/>
</dbReference>
<dbReference type="GO" id="GO:0003735">
    <property type="term" value="F:structural constituent of ribosome"/>
    <property type="evidence" value="ECO:0007669"/>
    <property type="project" value="InterPro"/>
</dbReference>
<dbReference type="GO" id="GO:0008270">
    <property type="term" value="F:zinc ion binding"/>
    <property type="evidence" value="ECO:0007669"/>
    <property type="project" value="UniProtKB-KW"/>
</dbReference>
<dbReference type="GO" id="GO:0006412">
    <property type="term" value="P:translation"/>
    <property type="evidence" value="ECO:0007669"/>
    <property type="project" value="InterPro"/>
</dbReference>
<dbReference type="FunFam" id="2.20.25.30:FF:000001">
    <property type="entry name" value="Ribosomal protein L37"/>
    <property type="match status" value="1"/>
</dbReference>
<dbReference type="Gene3D" id="2.20.25.30">
    <property type="match status" value="1"/>
</dbReference>
<dbReference type="HAMAP" id="MF_00547">
    <property type="entry name" value="Ribosomal_eL37"/>
    <property type="match status" value="1"/>
</dbReference>
<dbReference type="InterPro" id="IPR001569">
    <property type="entry name" value="Ribosomal_eL37"/>
</dbReference>
<dbReference type="InterPro" id="IPR011331">
    <property type="entry name" value="Ribosomal_eL37/eL43"/>
</dbReference>
<dbReference type="InterPro" id="IPR018267">
    <property type="entry name" value="Ribosomal_eL37_CS"/>
</dbReference>
<dbReference type="InterPro" id="IPR011332">
    <property type="entry name" value="Ribosomal_zn-bd"/>
</dbReference>
<dbReference type="PANTHER" id="PTHR10768">
    <property type="entry name" value="60S RIBOSOMAL PROTEIN L37"/>
    <property type="match status" value="1"/>
</dbReference>
<dbReference type="PANTHER" id="PTHR10768:SF22">
    <property type="entry name" value="LARGE RIBOSOMAL SUBUNIT PROTEIN EL37"/>
    <property type="match status" value="1"/>
</dbReference>
<dbReference type="Pfam" id="PF01907">
    <property type="entry name" value="Ribosomal_L37e"/>
    <property type="match status" value="1"/>
</dbReference>
<dbReference type="SUPFAM" id="SSF57829">
    <property type="entry name" value="Zn-binding ribosomal proteins"/>
    <property type="match status" value="1"/>
</dbReference>
<dbReference type="PROSITE" id="PS01077">
    <property type="entry name" value="RIBOSOMAL_L37E"/>
    <property type="match status" value="1"/>
</dbReference>
<organism>
    <name type="scientific">Rattus norvegicus</name>
    <name type="common">Rat</name>
    <dbReference type="NCBI Taxonomy" id="10116"/>
    <lineage>
        <taxon>Eukaryota</taxon>
        <taxon>Metazoa</taxon>
        <taxon>Chordata</taxon>
        <taxon>Craniata</taxon>
        <taxon>Vertebrata</taxon>
        <taxon>Euteleostomi</taxon>
        <taxon>Mammalia</taxon>
        <taxon>Eutheria</taxon>
        <taxon>Euarchontoglires</taxon>
        <taxon>Glires</taxon>
        <taxon>Rodentia</taxon>
        <taxon>Myomorpha</taxon>
        <taxon>Muroidea</taxon>
        <taxon>Muridae</taxon>
        <taxon>Murinae</taxon>
        <taxon>Rattus</taxon>
    </lineage>
</organism>
<name>RL37_RAT</name>
<evidence type="ECO:0000250" key="1">
    <source>
        <dbReference type="UniProtKB" id="P49166"/>
    </source>
</evidence>
<evidence type="ECO:0000250" key="2">
    <source>
        <dbReference type="UniProtKB" id="P61927"/>
    </source>
</evidence>
<evidence type="ECO:0000255" key="3"/>
<evidence type="ECO:0000269" key="4">
    <source>
    </source>
</evidence>
<evidence type="ECO:0000305" key="5"/>
<accession>P61928</accession>
<accession>P02403</accession>
<accession>Q99883</accession>
<feature type="initiator methionine" description="Removed" evidence="4">
    <location>
        <position position="1"/>
    </location>
</feature>
<feature type="chain" id="PRO_0000139707" description="Large ribosomal subunit protein eL37">
    <location>
        <begin position="2"/>
        <end position="97"/>
    </location>
</feature>
<feature type="zinc finger region" description="C4-type" evidence="3">
    <location>
        <begin position="19"/>
        <end position="37"/>
    </location>
</feature>
<feature type="binding site" evidence="1">
    <location>
        <position position="19"/>
    </location>
    <ligand>
        <name>Zn(2+)</name>
        <dbReference type="ChEBI" id="CHEBI:29105"/>
    </ligand>
</feature>
<feature type="binding site" evidence="1">
    <location>
        <position position="22"/>
    </location>
    <ligand>
        <name>Zn(2+)</name>
        <dbReference type="ChEBI" id="CHEBI:29105"/>
    </ligand>
</feature>
<feature type="binding site" evidence="1">
    <location>
        <position position="34"/>
    </location>
    <ligand>
        <name>Zn(2+)</name>
        <dbReference type="ChEBI" id="CHEBI:29105"/>
    </ligand>
</feature>
<feature type="binding site" evidence="1">
    <location>
        <position position="37"/>
    </location>
    <ligand>
        <name>Zn(2+)</name>
        <dbReference type="ChEBI" id="CHEBI:29105"/>
    </ligand>
</feature>
<feature type="modified residue" description="N6-acetyllysine" evidence="2">
    <location>
        <position position="10"/>
    </location>
</feature>
<feature type="modified residue" description="Phosphoserine" evidence="2">
    <location>
        <position position="96"/>
    </location>
</feature>
<feature type="modified residue" description="Phosphoserine" evidence="2">
    <location>
        <position position="97"/>
    </location>
</feature>
<reference key="1">
    <citation type="journal article" date="1983" name="J. Biol. Chem.">
        <title>The primary structure of rat liver ribosomal protein L37. Homology with yeast and bacterial ribosomal proteins.</title>
        <authorList>
            <person name="Lin A."/>
            <person name="McNally J."/>
            <person name="Wool I.G."/>
        </authorList>
    </citation>
    <scope>PRELIMINARY PROTEIN SEQUENCE OF 2-97</scope>
    <source>
        <tissue>Liver</tissue>
    </source>
</reference>
<reference key="2">
    <citation type="journal article" date="1993" name="Biochem. Biophys. Res. Commun.">
        <title>The primary structure of L37 -- a rat ribosomal protein with a zinc finger-like motif.</title>
        <authorList>
            <person name="Chan Y.-L."/>
            <person name="Paz V."/>
            <person name="Olvera J."/>
            <person name="Wool I.G."/>
        </authorList>
    </citation>
    <scope>NUCLEOTIDE SEQUENCE [MRNA]</scope>
    <scope>PROTEIN SEQUENCE OF 2-40</scope>
    <source>
        <strain>Sprague-Dawley</strain>
        <tissue>Liver</tissue>
    </source>
</reference>
<reference key="3">
    <citation type="journal article" date="1995" name="Eur. J. Biochem.">
        <title>Cell cycle, differentiation and tissue-independent expression of ribosomal protein L37.</title>
        <authorList>
            <person name="Su S."/>
            <person name="Bird R.C."/>
        </authorList>
    </citation>
    <scope>NUCLEOTIDE SEQUENCE [MRNA]</scope>
</reference>
<reference key="4">
    <citation type="journal article" date="2004" name="Genome Res.">
        <title>The status, quality, and expansion of the NIH full-length cDNA project: the Mammalian Gene Collection (MGC).</title>
        <authorList>
            <consortium name="The MGC Project Team"/>
        </authorList>
    </citation>
    <scope>NUCLEOTIDE SEQUENCE [LARGE SCALE MRNA]</scope>
    <source>
        <tissue>Heart</tissue>
        <tissue>Pituitary</tissue>
    </source>
</reference>
<protein>
    <recommendedName>
        <fullName evidence="5">Large ribosomal subunit protein eL37</fullName>
    </recommendedName>
    <alternativeName>
        <fullName>60S ribosomal protein L37</fullName>
    </alternativeName>
</protein>
<comment type="function">
    <text evidence="2">Component of the large ribosomal subunit. The ribosome is a large ribonucleoprotein complex responsible for the synthesis of proteins in the cell.</text>
</comment>
<comment type="subunit">
    <text evidence="2">Component of the large ribosomal subunit.</text>
</comment>
<comment type="subcellular location">
    <subcellularLocation>
        <location evidence="2">Cytoplasm</location>
    </subcellularLocation>
</comment>
<comment type="similarity">
    <text evidence="5">Belongs to the eukaryotic ribosomal protein eL37 family.</text>
</comment>
<comment type="sequence caution" evidence="5">
    <conflict type="miscellaneous discrepancy" ref="1"/>
    <text>Differs from that shown extensively.</text>
</comment>
<keyword id="KW-0007">Acetylation</keyword>
<keyword id="KW-0963">Cytoplasm</keyword>
<keyword id="KW-0903">Direct protein sequencing</keyword>
<keyword id="KW-0479">Metal-binding</keyword>
<keyword id="KW-0597">Phosphoprotein</keyword>
<keyword id="KW-1185">Reference proteome</keyword>
<keyword id="KW-0687">Ribonucleoprotein</keyword>
<keyword id="KW-0689">Ribosomal protein</keyword>
<keyword id="KW-0694">RNA-binding</keyword>
<keyword id="KW-0699">rRNA-binding</keyword>
<keyword id="KW-0862">Zinc</keyword>
<keyword id="KW-0863">Zinc-finger</keyword>
<sequence>MTKGTSSFGKRRNKTHTLCRRCGSKAYHLQKSTCGKCGYPAKRKRKYNWSAKAKRRNTTGTGRMRHLKIVYRRFRHGFREGTTPKPKRAAVAASSSS</sequence>